<protein>
    <recommendedName>
        <fullName evidence="1">Large ribosomal subunit protein bL17</fullName>
    </recommendedName>
    <alternativeName>
        <fullName evidence="2">50S ribosomal protein L17</fullName>
    </alternativeName>
</protein>
<reference key="1">
    <citation type="journal article" date="2004" name="Proc. Natl. Acad. Sci. U.S.A.">
        <title>Genome sequence of the enterobacterial phytopathogen Erwinia carotovora subsp. atroseptica and characterization of virulence factors.</title>
        <authorList>
            <person name="Bell K.S."/>
            <person name="Sebaihia M."/>
            <person name="Pritchard L."/>
            <person name="Holden M.T.G."/>
            <person name="Hyman L.J."/>
            <person name="Holeva M.C."/>
            <person name="Thomson N.R."/>
            <person name="Bentley S.D."/>
            <person name="Churcher L.J.C."/>
            <person name="Mungall K."/>
            <person name="Atkin R."/>
            <person name="Bason N."/>
            <person name="Brooks K."/>
            <person name="Chillingworth T."/>
            <person name="Clark K."/>
            <person name="Doggett J."/>
            <person name="Fraser A."/>
            <person name="Hance Z."/>
            <person name="Hauser H."/>
            <person name="Jagels K."/>
            <person name="Moule S."/>
            <person name="Norbertczak H."/>
            <person name="Ormond D."/>
            <person name="Price C."/>
            <person name="Quail M.A."/>
            <person name="Sanders M."/>
            <person name="Walker D."/>
            <person name="Whitehead S."/>
            <person name="Salmond G.P.C."/>
            <person name="Birch P.R.J."/>
            <person name="Parkhill J."/>
            <person name="Toth I.K."/>
        </authorList>
    </citation>
    <scope>NUCLEOTIDE SEQUENCE [LARGE SCALE GENOMIC DNA]</scope>
    <source>
        <strain>SCRI 1043 / ATCC BAA-672</strain>
    </source>
</reference>
<organism>
    <name type="scientific">Pectobacterium atrosepticum (strain SCRI 1043 / ATCC BAA-672)</name>
    <name type="common">Erwinia carotovora subsp. atroseptica</name>
    <dbReference type="NCBI Taxonomy" id="218491"/>
    <lineage>
        <taxon>Bacteria</taxon>
        <taxon>Pseudomonadati</taxon>
        <taxon>Pseudomonadota</taxon>
        <taxon>Gammaproteobacteria</taxon>
        <taxon>Enterobacterales</taxon>
        <taxon>Pectobacteriaceae</taxon>
        <taxon>Pectobacterium</taxon>
    </lineage>
</organism>
<proteinExistence type="inferred from homology"/>
<comment type="subunit">
    <text evidence="1">Part of the 50S ribosomal subunit. Contacts protein L32.</text>
</comment>
<comment type="similarity">
    <text evidence="1">Belongs to the bacterial ribosomal protein bL17 family.</text>
</comment>
<feature type="chain" id="PRO_0000267869" description="Large ribosomal subunit protein bL17">
    <location>
        <begin position="1"/>
        <end position="130"/>
    </location>
</feature>
<accession>Q6CZZ6</accession>
<gene>
    <name evidence="1" type="primary">rplQ</name>
    <name type="ordered locus">ECA4005</name>
</gene>
<sequence>MRHRKSGRQLNRNSSHRQAMFRNMASSLVRHEIIKTTLPKAKELRRVVEPLITLAKTDSVANRRLAFARTRDNEIVAKLFNELGPRFASRAGGYTRILKCGFRAGDNAPMAYIELVDRSVSQTEEVATAE</sequence>
<keyword id="KW-1185">Reference proteome</keyword>
<keyword id="KW-0687">Ribonucleoprotein</keyword>
<keyword id="KW-0689">Ribosomal protein</keyword>
<dbReference type="EMBL" id="BX950851">
    <property type="protein sequence ID" value="CAG76902.1"/>
    <property type="molecule type" value="Genomic_DNA"/>
</dbReference>
<dbReference type="RefSeq" id="WP_005970246.1">
    <property type="nucleotide sequence ID" value="NC_004547.2"/>
</dbReference>
<dbReference type="SMR" id="Q6CZZ6"/>
<dbReference type="STRING" id="218491.ECA4005"/>
<dbReference type="GeneID" id="93391954"/>
<dbReference type="KEGG" id="eca:ECA4005"/>
<dbReference type="eggNOG" id="COG0203">
    <property type="taxonomic scope" value="Bacteria"/>
</dbReference>
<dbReference type="HOGENOM" id="CLU_074407_2_0_6"/>
<dbReference type="OrthoDB" id="9809073at2"/>
<dbReference type="Proteomes" id="UP000007966">
    <property type="component" value="Chromosome"/>
</dbReference>
<dbReference type="GO" id="GO:0022625">
    <property type="term" value="C:cytosolic large ribosomal subunit"/>
    <property type="evidence" value="ECO:0007669"/>
    <property type="project" value="TreeGrafter"/>
</dbReference>
<dbReference type="GO" id="GO:0003735">
    <property type="term" value="F:structural constituent of ribosome"/>
    <property type="evidence" value="ECO:0007669"/>
    <property type="project" value="InterPro"/>
</dbReference>
<dbReference type="GO" id="GO:0006412">
    <property type="term" value="P:translation"/>
    <property type="evidence" value="ECO:0007669"/>
    <property type="project" value="UniProtKB-UniRule"/>
</dbReference>
<dbReference type="FunFam" id="3.90.1030.10:FF:000001">
    <property type="entry name" value="50S ribosomal protein L17"/>
    <property type="match status" value="1"/>
</dbReference>
<dbReference type="Gene3D" id="3.90.1030.10">
    <property type="entry name" value="Ribosomal protein L17"/>
    <property type="match status" value="1"/>
</dbReference>
<dbReference type="HAMAP" id="MF_01368">
    <property type="entry name" value="Ribosomal_bL17"/>
    <property type="match status" value="1"/>
</dbReference>
<dbReference type="InterPro" id="IPR000456">
    <property type="entry name" value="Ribosomal_bL17"/>
</dbReference>
<dbReference type="InterPro" id="IPR047859">
    <property type="entry name" value="Ribosomal_bL17_CS"/>
</dbReference>
<dbReference type="InterPro" id="IPR036373">
    <property type="entry name" value="Ribosomal_bL17_sf"/>
</dbReference>
<dbReference type="NCBIfam" id="TIGR00059">
    <property type="entry name" value="L17"/>
    <property type="match status" value="1"/>
</dbReference>
<dbReference type="PANTHER" id="PTHR14413:SF16">
    <property type="entry name" value="LARGE RIBOSOMAL SUBUNIT PROTEIN BL17M"/>
    <property type="match status" value="1"/>
</dbReference>
<dbReference type="PANTHER" id="PTHR14413">
    <property type="entry name" value="RIBOSOMAL PROTEIN L17"/>
    <property type="match status" value="1"/>
</dbReference>
<dbReference type="Pfam" id="PF01196">
    <property type="entry name" value="Ribosomal_L17"/>
    <property type="match status" value="1"/>
</dbReference>
<dbReference type="SUPFAM" id="SSF64263">
    <property type="entry name" value="Prokaryotic ribosomal protein L17"/>
    <property type="match status" value="1"/>
</dbReference>
<dbReference type="PROSITE" id="PS01167">
    <property type="entry name" value="RIBOSOMAL_L17"/>
    <property type="match status" value="1"/>
</dbReference>
<name>RL17_PECAS</name>
<evidence type="ECO:0000255" key="1">
    <source>
        <dbReference type="HAMAP-Rule" id="MF_01368"/>
    </source>
</evidence>
<evidence type="ECO:0000305" key="2"/>